<reference key="1">
    <citation type="journal article" date="1998" name="Nature">
        <title>Deciphering the biology of Mycobacterium tuberculosis from the complete genome sequence.</title>
        <authorList>
            <person name="Cole S.T."/>
            <person name="Brosch R."/>
            <person name="Parkhill J."/>
            <person name="Garnier T."/>
            <person name="Churcher C.M."/>
            <person name="Harris D.E."/>
            <person name="Gordon S.V."/>
            <person name="Eiglmeier K."/>
            <person name="Gas S."/>
            <person name="Barry C.E. III"/>
            <person name="Tekaia F."/>
            <person name="Badcock K."/>
            <person name="Basham D."/>
            <person name="Brown D."/>
            <person name="Chillingworth T."/>
            <person name="Connor R."/>
            <person name="Davies R.M."/>
            <person name="Devlin K."/>
            <person name="Feltwell T."/>
            <person name="Gentles S."/>
            <person name="Hamlin N."/>
            <person name="Holroyd S."/>
            <person name="Hornsby T."/>
            <person name="Jagels K."/>
            <person name="Krogh A."/>
            <person name="McLean J."/>
            <person name="Moule S."/>
            <person name="Murphy L.D."/>
            <person name="Oliver S."/>
            <person name="Osborne J."/>
            <person name="Quail M.A."/>
            <person name="Rajandream M.A."/>
            <person name="Rogers J."/>
            <person name="Rutter S."/>
            <person name="Seeger K."/>
            <person name="Skelton S."/>
            <person name="Squares S."/>
            <person name="Squares R."/>
            <person name="Sulston J.E."/>
            <person name="Taylor K."/>
            <person name="Whitehead S."/>
            <person name="Barrell B.G."/>
        </authorList>
    </citation>
    <scope>NUCLEOTIDE SEQUENCE [LARGE SCALE GENOMIC DNA]</scope>
    <source>
        <strain>ATCC 25618 / H37Rv</strain>
    </source>
</reference>
<reference key="2">
    <citation type="journal article" date="2001" name="FEMS Microbiol. Lett.">
        <title>Increased levels of sigJ mRNA in late stationary phase cultures of Mycobacterium tuberculosis detected by DNA array hybridisation.</title>
        <authorList>
            <person name="Hu Y."/>
            <person name="Coates A.R."/>
        </authorList>
    </citation>
    <scope>INDUCTION IN LATE STATIONARY PHASE</scope>
    <source>
        <strain>ATCC 25618 / H37Rv</strain>
    </source>
</reference>
<reference key="3">
    <citation type="journal article" date="2004" name="FEMS Microbiol. Lett.">
        <title>The Mycobacterium tuberculosis sigJ gene controls sensitivity of the bacterium to hydrogen peroxide.</title>
        <authorList>
            <person name="Hu Y."/>
            <person name="Kendall S."/>
            <person name="Stoker N.G."/>
            <person name="Coates A.R."/>
        </authorList>
    </citation>
    <scope>INDUCTION</scope>
    <scope>DISRUPTION PHENOTYPE IN MOUSE INFECTION</scope>
    <source>
        <strain>ATCC 25618 / H37Rv</strain>
    </source>
</reference>
<reference key="4">
    <citation type="journal article" date="2006" name="Res. Microbiol.">
        <title>Profiling of Mycobacterium tuberculosis gene expression during human macrophage infection: upregulation of the alternative sigma factor G, a group of transcriptional regulators, and proteins with unknown function.</title>
        <authorList>
            <person name="Cappelli G."/>
            <person name="Volpe E."/>
            <person name="Grassi M."/>
            <person name="Liseo B."/>
            <person name="Colizzi V."/>
            <person name="Mariani F."/>
        </authorList>
    </citation>
    <scope>FUNCTION</scope>
    <scope>INDUCTION IN HUMAN MACROPHAGES</scope>
    <source>
        <strain>ATCC 25618 / H37Rv</strain>
    </source>
</reference>
<reference key="5">
    <citation type="journal article" date="2008" name="FEMS Microbiol. Lett.">
        <title>Cascade of extracytoplasmic function sigma factors in Mycobacterium tuberculosis: identification of a sigmaJ-dependent promoter upstream of sigI.</title>
        <authorList>
            <person name="Homerova D."/>
            <person name="Halgasova L."/>
            <person name="Kormanec J."/>
        </authorList>
    </citation>
    <scope>FUNCTION AS A SIGMA FACTOR</scope>
    <source>
        <strain>ATCC 25618 / H37Rv</strain>
    </source>
</reference>
<reference key="6">
    <citation type="journal article" date="2011" name="Mol. Cell. Proteomics">
        <title>Proteogenomic analysis of Mycobacterium tuberculosis by high resolution mass spectrometry.</title>
        <authorList>
            <person name="Kelkar D.S."/>
            <person name="Kumar D."/>
            <person name="Kumar P."/>
            <person name="Balakrishnan L."/>
            <person name="Muthusamy B."/>
            <person name="Yadav A.K."/>
            <person name="Shrivastava P."/>
            <person name="Marimuthu A."/>
            <person name="Anand S."/>
            <person name="Sundaram H."/>
            <person name="Kingsbury R."/>
            <person name="Harsha H.C."/>
            <person name="Nair B."/>
            <person name="Prasad T.S."/>
            <person name="Chauhan D.S."/>
            <person name="Katoch K."/>
            <person name="Katoch V.M."/>
            <person name="Kumar P."/>
            <person name="Chaerkady R."/>
            <person name="Ramachandran S."/>
            <person name="Dash D."/>
            <person name="Pandey A."/>
        </authorList>
    </citation>
    <scope>IDENTIFICATION BY MASS SPECTROMETRY [LARGE SCALE ANALYSIS]</scope>
    <source>
        <strain>ATCC 25618 / H37Rv</strain>
    </source>
</reference>
<comment type="function">
    <text evidence="1 6 7">Sigma factors are initiation factors that promote the attachment of RNA polymerase to specific initiation sites and are then released. Extracytoplasmic function (ECF) sigma factors are held in an inactive form by an anti-sigma factor until released, although no anti-sigma factor is known for this protein (By similarity). Regulates the promoter of SigI, may not be autoregulated.</text>
</comment>
<comment type="subunit">
    <text evidence="8">Interacts transiently with the RNA polymerase catalytic core formed by RpoA, RpoB, RpoC and RpoZ (2 alpha, 1 beta, 1 beta' and 1 omega subunit) to form the RNA polymerase holoenzyme that can initiate transcription.</text>
</comment>
<comment type="induction">
    <text evidence="4 5 6">Undetectable expression in log phase, 18-fold induced by 30 days, decreasing slightly after (at protein level). Up-regulated 2.4-fold 7 days after infection of human macrophages.</text>
</comment>
<comment type="domain">
    <text evidence="1">The sigma-70 factor domain-2 mediates sequence-specific interaction with the -10 element in promoter DNA, and plays an important role in melting the double-stranded DNA and the formation of the transcription bubble. The sigma-70 factor domain-2 mediates interaction with the RNA polymerase subunits RpoB and RpoC (By similarity).</text>
</comment>
<comment type="domain">
    <text evidence="1">The sigma-70 factor domain-4 contains a helix-turn-helix (H-T-H) motif that mediates interaction with the -35 element in promoter DNA. The domain also mediates interaction with the RNA polymerase subunit RpoA. Interactions between sigma-70 factor domain-4 and anti-sigma factors prevents interaction of sigma factors with the RNA polymerase catalytic core (By similarity).</text>
</comment>
<comment type="disruption phenotype">
    <text evidence="5">No difference in growth in culture up to 120 days. Increased sensitivity to 10 and 20 mM H(2)O(2), no difference in response to growth at 53 degrees Celsius, pH 4.0, 10% ethanol or 0.05% sodium dodecyl sulfate (surface stress). No detectable difference in spleen or lungs of infected BALB/c mice during 15 weeks growth.</text>
</comment>
<comment type="similarity">
    <text evidence="8">Belongs to the sigma-70 factor family. ECF subfamily.</text>
</comment>
<feature type="chain" id="PRO_0000423648" description="ECF RNA polymerase sigma factor SigJ">
    <location>
        <begin position="1"/>
        <end position="312"/>
    </location>
</feature>
<feature type="DNA-binding region" description="H-T-H motif" evidence="1">
    <location>
        <begin position="131"/>
        <end position="150"/>
    </location>
</feature>
<feature type="region of interest" description="Sigma-70 factor domain-2">
    <location>
        <begin position="6"/>
        <end position="65"/>
    </location>
</feature>
<feature type="region of interest" description="Sigma-70 factor domain-4">
    <location>
        <begin position="107"/>
        <end position="155"/>
    </location>
</feature>
<feature type="region of interest" description="Disordered" evidence="3">
    <location>
        <begin position="293"/>
        <end position="312"/>
    </location>
</feature>
<feature type="short sequence motif" description="Polymerase core binding" evidence="2">
    <location>
        <begin position="29"/>
        <end position="32"/>
    </location>
</feature>
<feature type="helix" evidence="9">
    <location>
        <begin position="3"/>
        <end position="20"/>
    </location>
</feature>
<feature type="helix" evidence="9">
    <location>
        <begin position="24"/>
        <end position="28"/>
    </location>
</feature>
<feature type="helix" evidence="9">
    <location>
        <begin position="31"/>
        <end position="36"/>
    </location>
</feature>
<feature type="helix" evidence="9">
    <location>
        <begin position="48"/>
        <end position="63"/>
    </location>
</feature>
<feature type="helix" evidence="9">
    <location>
        <begin position="94"/>
        <end position="97"/>
    </location>
</feature>
<feature type="helix" evidence="9">
    <location>
        <begin position="100"/>
        <end position="102"/>
    </location>
</feature>
<feature type="helix" evidence="9">
    <location>
        <begin position="104"/>
        <end position="110"/>
    </location>
</feature>
<feature type="turn" evidence="9">
    <location>
        <begin position="111"/>
        <end position="113"/>
    </location>
</feature>
<feature type="strand" evidence="9">
    <location>
        <begin position="115"/>
        <end position="117"/>
    </location>
</feature>
<feature type="helix" evidence="9">
    <location>
        <begin position="118"/>
        <end position="125"/>
    </location>
</feature>
<feature type="helix" evidence="9">
    <location>
        <begin position="131"/>
        <end position="138"/>
    </location>
</feature>
<feature type="helix" evidence="9">
    <location>
        <begin position="143"/>
        <end position="153"/>
    </location>
</feature>
<feature type="helix" evidence="9">
    <location>
        <begin position="171"/>
        <end position="181"/>
    </location>
</feature>
<feature type="helix" evidence="9">
    <location>
        <begin position="182"/>
        <end position="184"/>
    </location>
</feature>
<feature type="helix" evidence="9">
    <location>
        <begin position="187"/>
        <end position="192"/>
    </location>
</feature>
<feature type="strand" evidence="9">
    <location>
        <begin position="199"/>
        <end position="203"/>
    </location>
</feature>
<feature type="strand" evidence="9">
    <location>
        <begin position="206"/>
        <end position="208"/>
    </location>
</feature>
<feature type="strand" evidence="9">
    <location>
        <begin position="215"/>
        <end position="217"/>
    </location>
</feature>
<feature type="helix" evidence="9">
    <location>
        <begin position="218"/>
        <end position="232"/>
    </location>
</feature>
<feature type="helix" evidence="9">
    <location>
        <begin position="235"/>
        <end position="237"/>
    </location>
</feature>
<feature type="strand" evidence="9">
    <location>
        <begin position="240"/>
        <end position="245"/>
    </location>
</feature>
<feature type="strand" evidence="9">
    <location>
        <begin position="248"/>
        <end position="253"/>
    </location>
</feature>
<feature type="strand" evidence="9">
    <location>
        <begin position="259"/>
        <end position="261"/>
    </location>
</feature>
<feature type="strand" evidence="9">
    <location>
        <begin position="268"/>
        <end position="275"/>
    </location>
</feature>
<feature type="strand" evidence="9">
    <location>
        <begin position="278"/>
        <end position="285"/>
    </location>
</feature>
<feature type="helix" evidence="9">
    <location>
        <begin position="288"/>
        <end position="290"/>
    </location>
</feature>
<sequence length="312" mass="33530">MEVSEFEALRQHLMSVAYRLTGTVADAEDIVQEAWLRWDSPDTVIADPRAWLTTVVSRLGLDKLRSAAHRRETYTGTWLPEPVVTGLDATDPLAAVVAAEDARFAAMVVLERLRPDQRVAFVLHDGFAVPFAEVAEVLGTSEAAARQLASRARKAVTAQPALISGDPDPAHNEVVGRLMAAMAAGDLDTVVSLLHPDVTFTGDSNGKAPTAVRAVRGSDKVVRFILGLVQRYGPGLFGANQLALVNGELGAYTAGLPGVDGYRAMAPRITAITVRDGKVCALWDIANPDKFTGSPLKERRAQPTGRGRHHRN</sequence>
<name>SIGJ_MYCTU</name>
<protein>
    <recommendedName>
        <fullName>ECF RNA polymerase sigma factor SigJ</fullName>
        <shortName>ECF sigma factor SigJ</shortName>
    </recommendedName>
    <alternativeName>
        <fullName>Alternative RNA polymerase sigma factor SigJ</fullName>
    </alternativeName>
    <alternativeName>
        <fullName>RNA polymerase sigma-J factor</fullName>
        <shortName>Sigma-J factor</shortName>
    </alternativeName>
</protein>
<dbReference type="EMBL" id="AL123456">
    <property type="protein sequence ID" value="CCP46149.1"/>
    <property type="molecule type" value="Genomic_DNA"/>
</dbReference>
<dbReference type="RefSeq" id="NP_217845.1">
    <property type="nucleotide sequence ID" value="NC_000962.3"/>
</dbReference>
<dbReference type="RefSeq" id="WP_009935306.1">
    <property type="nucleotide sequence ID" value="NZ_NVQJ01000051.1"/>
</dbReference>
<dbReference type="PDB" id="5XE7">
    <property type="method" value="X-ray"/>
    <property type="resolution" value="2.16 A"/>
    <property type="chains" value="A/B=1-306"/>
</dbReference>
<dbReference type="PDBsum" id="5XE7"/>
<dbReference type="SMR" id="L0TCG5"/>
<dbReference type="STRING" id="83332.Rv3328c"/>
<dbReference type="PaxDb" id="83332-Rv3328c"/>
<dbReference type="DNASU" id="887964"/>
<dbReference type="GeneID" id="887964"/>
<dbReference type="KEGG" id="mtu:Rv3328c"/>
<dbReference type="KEGG" id="mtv:RVBD_3328c"/>
<dbReference type="TubercuList" id="Rv3328c"/>
<dbReference type="eggNOG" id="COG1595">
    <property type="taxonomic scope" value="Bacteria"/>
</dbReference>
<dbReference type="InParanoid" id="L0TCG5"/>
<dbReference type="OrthoDB" id="3211555at2"/>
<dbReference type="PhylomeDB" id="L0TCG5"/>
<dbReference type="Proteomes" id="UP000001584">
    <property type="component" value="Chromosome"/>
</dbReference>
<dbReference type="GO" id="GO:0003677">
    <property type="term" value="F:DNA binding"/>
    <property type="evidence" value="ECO:0007669"/>
    <property type="project" value="UniProtKB-KW"/>
</dbReference>
<dbReference type="GO" id="GO:0016987">
    <property type="term" value="F:sigma factor activity"/>
    <property type="evidence" value="ECO:0000314"/>
    <property type="project" value="UniProtKB"/>
</dbReference>
<dbReference type="GO" id="GO:0006352">
    <property type="term" value="P:DNA-templated transcription initiation"/>
    <property type="evidence" value="ECO:0007669"/>
    <property type="project" value="InterPro"/>
</dbReference>
<dbReference type="GO" id="GO:0042542">
    <property type="term" value="P:response to hydrogen peroxide"/>
    <property type="evidence" value="ECO:0000315"/>
    <property type="project" value="MTBBASE"/>
</dbReference>
<dbReference type="Gene3D" id="1.10.1740.10">
    <property type="match status" value="1"/>
</dbReference>
<dbReference type="Gene3D" id="3.10.450.50">
    <property type="match status" value="1"/>
</dbReference>
<dbReference type="Gene3D" id="1.10.10.10">
    <property type="entry name" value="Winged helix-like DNA-binding domain superfamily/Winged helix DNA-binding domain"/>
    <property type="match status" value="1"/>
</dbReference>
<dbReference type="InterPro" id="IPR052704">
    <property type="entry name" value="ECF_Sigma-70_Domain"/>
</dbReference>
<dbReference type="InterPro" id="IPR032710">
    <property type="entry name" value="NTF2-like_dom_sf"/>
</dbReference>
<dbReference type="InterPro" id="IPR014284">
    <property type="entry name" value="RNA_pol_sigma-70_dom"/>
</dbReference>
<dbReference type="InterPro" id="IPR007627">
    <property type="entry name" value="RNA_pol_sigma70_r2"/>
</dbReference>
<dbReference type="InterPro" id="IPR013249">
    <property type="entry name" value="RNA_pol_sigma70_r4_t2"/>
</dbReference>
<dbReference type="InterPro" id="IPR013325">
    <property type="entry name" value="RNA_pol_sigma_r2"/>
</dbReference>
<dbReference type="InterPro" id="IPR013324">
    <property type="entry name" value="RNA_pol_sigma_r3/r4-like"/>
</dbReference>
<dbReference type="InterPro" id="IPR037401">
    <property type="entry name" value="SnoaL-like"/>
</dbReference>
<dbReference type="InterPro" id="IPR036388">
    <property type="entry name" value="WH-like_DNA-bd_sf"/>
</dbReference>
<dbReference type="NCBIfam" id="NF007214">
    <property type="entry name" value="PRK09636.1"/>
    <property type="match status" value="1"/>
</dbReference>
<dbReference type="NCBIfam" id="TIGR02937">
    <property type="entry name" value="sigma70-ECF"/>
    <property type="match status" value="1"/>
</dbReference>
<dbReference type="PANTHER" id="PTHR30173:SF36">
    <property type="entry name" value="ECF RNA POLYMERASE SIGMA FACTOR SIGJ"/>
    <property type="match status" value="1"/>
</dbReference>
<dbReference type="PANTHER" id="PTHR30173">
    <property type="entry name" value="SIGMA 19 FACTOR"/>
    <property type="match status" value="1"/>
</dbReference>
<dbReference type="Pfam" id="PF04542">
    <property type="entry name" value="Sigma70_r2"/>
    <property type="match status" value="1"/>
</dbReference>
<dbReference type="Pfam" id="PF08281">
    <property type="entry name" value="Sigma70_r4_2"/>
    <property type="match status" value="1"/>
</dbReference>
<dbReference type="Pfam" id="PF12680">
    <property type="entry name" value="SnoaL_2"/>
    <property type="match status" value="1"/>
</dbReference>
<dbReference type="SUPFAM" id="SSF54427">
    <property type="entry name" value="NTF2-like"/>
    <property type="match status" value="1"/>
</dbReference>
<dbReference type="SUPFAM" id="SSF88946">
    <property type="entry name" value="Sigma2 domain of RNA polymerase sigma factors"/>
    <property type="match status" value="1"/>
</dbReference>
<dbReference type="SUPFAM" id="SSF88659">
    <property type="entry name" value="Sigma3 and sigma4 domains of RNA polymerase sigma factors"/>
    <property type="match status" value="1"/>
</dbReference>
<accession>L0TCG5</accession>
<proteinExistence type="evidence at protein level"/>
<evidence type="ECO:0000250" key="1"/>
<evidence type="ECO:0000255" key="2"/>
<evidence type="ECO:0000256" key="3">
    <source>
        <dbReference type="SAM" id="MobiDB-lite"/>
    </source>
</evidence>
<evidence type="ECO:0000269" key="4">
    <source>
    </source>
</evidence>
<evidence type="ECO:0000269" key="5">
    <source>
    </source>
</evidence>
<evidence type="ECO:0000269" key="6">
    <source>
    </source>
</evidence>
<evidence type="ECO:0000269" key="7">
    <source>
    </source>
</evidence>
<evidence type="ECO:0000305" key="8"/>
<evidence type="ECO:0007829" key="9">
    <source>
        <dbReference type="PDB" id="5XE7"/>
    </source>
</evidence>
<gene>
    <name type="primary">sigJ</name>
    <name type="ordered locus">Rv3328c</name>
</gene>
<keyword id="KW-0002">3D-structure</keyword>
<keyword id="KW-0238">DNA-binding</keyword>
<keyword id="KW-1185">Reference proteome</keyword>
<keyword id="KW-0731">Sigma factor</keyword>
<keyword id="KW-0346">Stress response</keyword>
<keyword id="KW-0804">Transcription</keyword>
<keyword id="KW-0805">Transcription regulation</keyword>
<organism>
    <name type="scientific">Mycobacterium tuberculosis (strain ATCC 25618 / H37Rv)</name>
    <dbReference type="NCBI Taxonomy" id="83332"/>
    <lineage>
        <taxon>Bacteria</taxon>
        <taxon>Bacillati</taxon>
        <taxon>Actinomycetota</taxon>
        <taxon>Actinomycetes</taxon>
        <taxon>Mycobacteriales</taxon>
        <taxon>Mycobacteriaceae</taxon>
        <taxon>Mycobacterium</taxon>
        <taxon>Mycobacterium tuberculosis complex</taxon>
    </lineage>
</organism>